<dbReference type="EMBL" id="U20909">
    <property type="protein sequence ID" value="AAA62356.1"/>
    <property type="molecule type" value="Genomic_DNA"/>
</dbReference>
<dbReference type="EMBL" id="AL009126">
    <property type="protein sequence ID" value="CAB12993.1"/>
    <property type="molecule type" value="Genomic_DNA"/>
</dbReference>
<dbReference type="PIR" id="I40543">
    <property type="entry name" value="I40543"/>
</dbReference>
<dbReference type="RefSeq" id="NP_389018.1">
    <property type="nucleotide sequence ID" value="NC_000964.3"/>
</dbReference>
<dbReference type="RefSeq" id="WP_003232965.1">
    <property type="nucleotide sequence ID" value="NZ_OZ025638.1"/>
</dbReference>
<dbReference type="SMR" id="P42064"/>
<dbReference type="FunCoup" id="P42064">
    <property type="interactions" value="174"/>
</dbReference>
<dbReference type="STRING" id="224308.BSU11360"/>
<dbReference type="TCDB" id="3.A.1.5.20">
    <property type="family name" value="the atp-binding cassette (abc) superfamily"/>
</dbReference>
<dbReference type="PaxDb" id="224308-BSU11360"/>
<dbReference type="EnsemblBacteria" id="CAB12993">
    <property type="protein sequence ID" value="CAB12993"/>
    <property type="gene ID" value="BSU_11360"/>
</dbReference>
<dbReference type="GeneID" id="936391"/>
<dbReference type="KEGG" id="bsu:BSU11360"/>
<dbReference type="PATRIC" id="fig|224308.179.peg.1221"/>
<dbReference type="eggNOG" id="COG0444">
    <property type="taxonomic scope" value="Bacteria"/>
</dbReference>
<dbReference type="InParanoid" id="P42064"/>
<dbReference type="OrthoDB" id="9802264at2"/>
<dbReference type="PhylomeDB" id="P42064"/>
<dbReference type="BioCyc" id="BSUB:BSU11360-MONOMER"/>
<dbReference type="Proteomes" id="UP000001570">
    <property type="component" value="Chromosome"/>
</dbReference>
<dbReference type="GO" id="GO:0005886">
    <property type="term" value="C:plasma membrane"/>
    <property type="evidence" value="ECO:0007669"/>
    <property type="project" value="UniProtKB-SubCell"/>
</dbReference>
<dbReference type="GO" id="GO:0005524">
    <property type="term" value="F:ATP binding"/>
    <property type="evidence" value="ECO:0007669"/>
    <property type="project" value="UniProtKB-KW"/>
</dbReference>
<dbReference type="GO" id="GO:0016887">
    <property type="term" value="F:ATP hydrolysis activity"/>
    <property type="evidence" value="ECO:0007669"/>
    <property type="project" value="InterPro"/>
</dbReference>
<dbReference type="GO" id="GO:0030420">
    <property type="term" value="P:establishment of competence for transformation"/>
    <property type="evidence" value="ECO:0007669"/>
    <property type="project" value="UniProtKB-KW"/>
</dbReference>
<dbReference type="GO" id="GO:0015833">
    <property type="term" value="P:peptide transport"/>
    <property type="evidence" value="ECO:0007669"/>
    <property type="project" value="UniProtKB-KW"/>
</dbReference>
<dbReference type="GO" id="GO:0015031">
    <property type="term" value="P:protein transport"/>
    <property type="evidence" value="ECO:0007669"/>
    <property type="project" value="UniProtKB-KW"/>
</dbReference>
<dbReference type="GO" id="GO:0030435">
    <property type="term" value="P:sporulation resulting in formation of a cellular spore"/>
    <property type="evidence" value="ECO:0007669"/>
    <property type="project" value="UniProtKB-KW"/>
</dbReference>
<dbReference type="CDD" id="cd03257">
    <property type="entry name" value="ABC_NikE_OppD_transporters"/>
    <property type="match status" value="1"/>
</dbReference>
<dbReference type="FunFam" id="3.40.50.300:FF:000016">
    <property type="entry name" value="Oligopeptide ABC transporter ATP-binding component"/>
    <property type="match status" value="1"/>
</dbReference>
<dbReference type="Gene3D" id="3.40.50.300">
    <property type="entry name" value="P-loop containing nucleotide triphosphate hydrolases"/>
    <property type="match status" value="1"/>
</dbReference>
<dbReference type="InterPro" id="IPR003593">
    <property type="entry name" value="AAA+_ATPase"/>
</dbReference>
<dbReference type="InterPro" id="IPR050388">
    <property type="entry name" value="ABC_Ni/Peptide_Import"/>
</dbReference>
<dbReference type="InterPro" id="IPR003439">
    <property type="entry name" value="ABC_transporter-like_ATP-bd"/>
</dbReference>
<dbReference type="InterPro" id="IPR017871">
    <property type="entry name" value="ABC_transporter-like_CS"/>
</dbReference>
<dbReference type="InterPro" id="IPR013563">
    <property type="entry name" value="Oligopep_ABC_C"/>
</dbReference>
<dbReference type="InterPro" id="IPR027417">
    <property type="entry name" value="P-loop_NTPase"/>
</dbReference>
<dbReference type="NCBIfam" id="TIGR01727">
    <property type="entry name" value="oligo_HPY"/>
    <property type="match status" value="1"/>
</dbReference>
<dbReference type="PANTHER" id="PTHR43297:SF2">
    <property type="entry name" value="DIPEPTIDE TRANSPORT ATP-BINDING PROTEIN DPPD"/>
    <property type="match status" value="1"/>
</dbReference>
<dbReference type="PANTHER" id="PTHR43297">
    <property type="entry name" value="OLIGOPEPTIDE TRANSPORT ATP-BINDING PROTEIN APPD"/>
    <property type="match status" value="1"/>
</dbReference>
<dbReference type="Pfam" id="PF00005">
    <property type="entry name" value="ABC_tran"/>
    <property type="match status" value="1"/>
</dbReference>
<dbReference type="Pfam" id="PF08352">
    <property type="entry name" value="oligo_HPY"/>
    <property type="match status" value="1"/>
</dbReference>
<dbReference type="SMART" id="SM00382">
    <property type="entry name" value="AAA"/>
    <property type="match status" value="1"/>
</dbReference>
<dbReference type="SUPFAM" id="SSF52540">
    <property type="entry name" value="P-loop containing nucleoside triphosphate hydrolases"/>
    <property type="match status" value="1"/>
</dbReference>
<dbReference type="PROSITE" id="PS00211">
    <property type="entry name" value="ABC_TRANSPORTER_1"/>
    <property type="match status" value="1"/>
</dbReference>
<dbReference type="PROSITE" id="PS50893">
    <property type="entry name" value="ABC_TRANSPORTER_2"/>
    <property type="match status" value="1"/>
</dbReference>
<comment type="function">
    <text>This protein is a component of an oligopeptide permease, a binding protein-dependent transport system. This APP system can completely substitute for the OPP system in both sporulation and genetic competence, though, unlike OPP, is incapable of transporting tripeptides. Probably responsible for energy coupling to the transport system.</text>
</comment>
<comment type="subcellular location">
    <subcellularLocation>
        <location>Cell membrane</location>
        <topology>Peripheral membrane protein</topology>
    </subcellularLocation>
</comment>
<comment type="similarity">
    <text evidence="2">Belongs to the ABC transporter superfamily.</text>
</comment>
<name>APPD_BACSU</name>
<proteinExistence type="inferred from homology"/>
<keyword id="KW-0067">ATP-binding</keyword>
<keyword id="KW-1003">Cell membrane</keyword>
<keyword id="KW-0178">Competence</keyword>
<keyword id="KW-0472">Membrane</keyword>
<keyword id="KW-0547">Nucleotide-binding</keyword>
<keyword id="KW-0571">Peptide transport</keyword>
<keyword id="KW-0653">Protein transport</keyword>
<keyword id="KW-1185">Reference proteome</keyword>
<keyword id="KW-0749">Sporulation</keyword>
<keyword id="KW-0813">Transport</keyword>
<organism>
    <name type="scientific">Bacillus subtilis (strain 168)</name>
    <dbReference type="NCBI Taxonomy" id="224308"/>
    <lineage>
        <taxon>Bacteria</taxon>
        <taxon>Bacillati</taxon>
        <taxon>Bacillota</taxon>
        <taxon>Bacilli</taxon>
        <taxon>Bacillales</taxon>
        <taxon>Bacillaceae</taxon>
        <taxon>Bacillus</taxon>
    </lineage>
</organism>
<evidence type="ECO:0000255" key="1">
    <source>
        <dbReference type="PROSITE-ProRule" id="PRU00434"/>
    </source>
</evidence>
<evidence type="ECO:0000305" key="2"/>
<reference key="1">
    <citation type="journal article" date="1994" name="Mol. Microbiol.">
        <title>Identification of a second oligopeptide transport system in Bacillus subtilis and determination of its role in sporulation.</title>
        <authorList>
            <person name="Koide A."/>
            <person name="Hoch J.A."/>
        </authorList>
    </citation>
    <scope>NUCLEOTIDE SEQUENCE [GENOMIC DNA]</scope>
    <source>
        <strain>168</strain>
    </source>
</reference>
<reference key="2">
    <citation type="journal article" date="1997" name="Nature">
        <title>The complete genome sequence of the Gram-positive bacterium Bacillus subtilis.</title>
        <authorList>
            <person name="Kunst F."/>
            <person name="Ogasawara N."/>
            <person name="Moszer I."/>
            <person name="Albertini A.M."/>
            <person name="Alloni G."/>
            <person name="Azevedo V."/>
            <person name="Bertero M.G."/>
            <person name="Bessieres P."/>
            <person name="Bolotin A."/>
            <person name="Borchert S."/>
            <person name="Borriss R."/>
            <person name="Boursier L."/>
            <person name="Brans A."/>
            <person name="Braun M."/>
            <person name="Brignell S.C."/>
            <person name="Bron S."/>
            <person name="Brouillet S."/>
            <person name="Bruschi C.V."/>
            <person name="Caldwell B."/>
            <person name="Capuano V."/>
            <person name="Carter N.M."/>
            <person name="Choi S.-K."/>
            <person name="Codani J.-J."/>
            <person name="Connerton I.F."/>
            <person name="Cummings N.J."/>
            <person name="Daniel R.A."/>
            <person name="Denizot F."/>
            <person name="Devine K.M."/>
            <person name="Duesterhoeft A."/>
            <person name="Ehrlich S.D."/>
            <person name="Emmerson P.T."/>
            <person name="Entian K.-D."/>
            <person name="Errington J."/>
            <person name="Fabret C."/>
            <person name="Ferrari E."/>
            <person name="Foulger D."/>
            <person name="Fritz C."/>
            <person name="Fujita M."/>
            <person name="Fujita Y."/>
            <person name="Fuma S."/>
            <person name="Galizzi A."/>
            <person name="Galleron N."/>
            <person name="Ghim S.-Y."/>
            <person name="Glaser P."/>
            <person name="Goffeau A."/>
            <person name="Golightly E.J."/>
            <person name="Grandi G."/>
            <person name="Guiseppi G."/>
            <person name="Guy B.J."/>
            <person name="Haga K."/>
            <person name="Haiech J."/>
            <person name="Harwood C.R."/>
            <person name="Henaut A."/>
            <person name="Hilbert H."/>
            <person name="Holsappel S."/>
            <person name="Hosono S."/>
            <person name="Hullo M.-F."/>
            <person name="Itaya M."/>
            <person name="Jones L.-M."/>
            <person name="Joris B."/>
            <person name="Karamata D."/>
            <person name="Kasahara Y."/>
            <person name="Klaerr-Blanchard M."/>
            <person name="Klein C."/>
            <person name="Kobayashi Y."/>
            <person name="Koetter P."/>
            <person name="Koningstein G."/>
            <person name="Krogh S."/>
            <person name="Kumano M."/>
            <person name="Kurita K."/>
            <person name="Lapidus A."/>
            <person name="Lardinois S."/>
            <person name="Lauber J."/>
            <person name="Lazarevic V."/>
            <person name="Lee S.-M."/>
            <person name="Levine A."/>
            <person name="Liu H."/>
            <person name="Masuda S."/>
            <person name="Mauel C."/>
            <person name="Medigue C."/>
            <person name="Medina N."/>
            <person name="Mellado R.P."/>
            <person name="Mizuno M."/>
            <person name="Moestl D."/>
            <person name="Nakai S."/>
            <person name="Noback M."/>
            <person name="Noone D."/>
            <person name="O'Reilly M."/>
            <person name="Ogawa K."/>
            <person name="Ogiwara A."/>
            <person name="Oudega B."/>
            <person name="Park S.-H."/>
            <person name="Parro V."/>
            <person name="Pohl T.M."/>
            <person name="Portetelle D."/>
            <person name="Porwollik S."/>
            <person name="Prescott A.M."/>
            <person name="Presecan E."/>
            <person name="Pujic P."/>
            <person name="Purnelle B."/>
            <person name="Rapoport G."/>
            <person name="Rey M."/>
            <person name="Reynolds S."/>
            <person name="Rieger M."/>
            <person name="Rivolta C."/>
            <person name="Rocha E."/>
            <person name="Roche B."/>
            <person name="Rose M."/>
            <person name="Sadaie Y."/>
            <person name="Sato T."/>
            <person name="Scanlan E."/>
            <person name="Schleich S."/>
            <person name="Schroeter R."/>
            <person name="Scoffone F."/>
            <person name="Sekiguchi J."/>
            <person name="Sekowska A."/>
            <person name="Seror S.J."/>
            <person name="Serror P."/>
            <person name="Shin B.-S."/>
            <person name="Soldo B."/>
            <person name="Sorokin A."/>
            <person name="Tacconi E."/>
            <person name="Takagi T."/>
            <person name="Takahashi H."/>
            <person name="Takemaru K."/>
            <person name="Takeuchi M."/>
            <person name="Tamakoshi A."/>
            <person name="Tanaka T."/>
            <person name="Terpstra P."/>
            <person name="Tognoni A."/>
            <person name="Tosato V."/>
            <person name="Uchiyama S."/>
            <person name="Vandenbol M."/>
            <person name="Vannier F."/>
            <person name="Vassarotti A."/>
            <person name="Viari A."/>
            <person name="Wambutt R."/>
            <person name="Wedler E."/>
            <person name="Wedler H."/>
            <person name="Weitzenegger T."/>
            <person name="Winters P."/>
            <person name="Wipat A."/>
            <person name="Yamamoto H."/>
            <person name="Yamane K."/>
            <person name="Yasumoto K."/>
            <person name="Yata K."/>
            <person name="Yoshida K."/>
            <person name="Yoshikawa H.-F."/>
            <person name="Zumstein E."/>
            <person name="Yoshikawa H."/>
            <person name="Danchin A."/>
        </authorList>
    </citation>
    <scope>NUCLEOTIDE SEQUENCE [LARGE SCALE GENOMIC DNA]</scope>
    <source>
        <strain>168</strain>
    </source>
</reference>
<accession>P42064</accession>
<sequence>MSTLLEVNNLKTYFFRKKEPIPAVDGVDFHISKGETVALVGESGSGKSITSLSIMGLVQSSGGKIMDGSIKLEDKDLTSFTENDYCKIRGNEVSMIFQEPMTSLNPVLTIGEQITEVLIYHKNMKKKEARQRAVELLQMVGFSRAEQIMKEYPHRLSGGMRQRVMIAIALSCNPKLLIADEPTTALDVTIQAQVLELMKDLCQKFNTSILLITHDLGVVSEAADRVIVMYCGQVVENATVDDLFLEPLHPYTEGLLTSIPVIDGEIDKLNAIKGSVPTPDNLPPGCRFAPRCPKAMDKCWTNQPSLLTHKSGRTVRCFLYEEEGAEQS</sequence>
<protein>
    <recommendedName>
        <fullName>Oligopeptide transport ATP-binding protein AppD</fullName>
    </recommendedName>
</protein>
<feature type="chain" id="PRO_0000091931" description="Oligopeptide transport ATP-binding protein AppD">
    <location>
        <begin position="1"/>
        <end position="328"/>
    </location>
</feature>
<feature type="domain" description="ABC transporter" evidence="1">
    <location>
        <begin position="5"/>
        <end position="256"/>
    </location>
</feature>
<feature type="binding site" evidence="1">
    <location>
        <begin position="41"/>
        <end position="48"/>
    </location>
    <ligand>
        <name>ATP</name>
        <dbReference type="ChEBI" id="CHEBI:30616"/>
    </ligand>
</feature>
<gene>
    <name type="primary">appD</name>
    <name type="ordered locus">BSU11360</name>
</gene>